<name>ILVD_MYCLE</name>
<keyword id="KW-0001">2Fe-2S</keyword>
<keyword id="KW-0028">Amino-acid biosynthesis</keyword>
<keyword id="KW-0100">Branched-chain amino acid biosynthesis</keyword>
<keyword id="KW-0408">Iron</keyword>
<keyword id="KW-0411">Iron-sulfur</keyword>
<keyword id="KW-0456">Lyase</keyword>
<keyword id="KW-0460">Magnesium</keyword>
<keyword id="KW-0479">Metal-binding</keyword>
<keyword id="KW-1185">Reference proteome</keyword>
<protein>
    <recommendedName>
        <fullName evidence="1">Dihydroxy-acid dehydratase</fullName>
        <shortName evidence="1">DAD</shortName>
        <ecNumber evidence="1">4.2.1.9</ecNumber>
    </recommendedName>
</protein>
<organism>
    <name type="scientific">Mycobacterium leprae (strain TN)</name>
    <dbReference type="NCBI Taxonomy" id="272631"/>
    <lineage>
        <taxon>Bacteria</taxon>
        <taxon>Bacillati</taxon>
        <taxon>Actinomycetota</taxon>
        <taxon>Actinomycetes</taxon>
        <taxon>Mycobacteriales</taxon>
        <taxon>Mycobacteriaceae</taxon>
        <taxon>Mycobacterium</taxon>
    </lineage>
</organism>
<evidence type="ECO:0000255" key="1">
    <source>
        <dbReference type="HAMAP-Rule" id="MF_00012"/>
    </source>
</evidence>
<proteinExistence type="inferred from homology"/>
<gene>
    <name evidence="1" type="primary">ilvD</name>
    <name type="ordered locus">ML2608</name>
    <name type="ORF">MLCL622.06c</name>
</gene>
<comment type="function">
    <text evidence="1">Functions in the biosynthesis of branched-chain amino acids. Catalyzes the dehydration of (2R,3R)-2,3-dihydroxy-3-methylpentanoate (2,3-dihydroxy-3-methylvalerate) into 2-oxo-3-methylpentanoate (2-oxo-3-methylvalerate) and of (2R)-2,3-dihydroxy-3-methylbutanoate (2,3-dihydroxyisovalerate) into 2-oxo-3-methylbutanoate (2-oxoisovalerate), the penultimate precursor to L-isoleucine and L-valine, respectively.</text>
</comment>
<comment type="catalytic activity">
    <reaction evidence="1">
        <text>(2R)-2,3-dihydroxy-3-methylbutanoate = 3-methyl-2-oxobutanoate + H2O</text>
        <dbReference type="Rhea" id="RHEA:24809"/>
        <dbReference type="ChEBI" id="CHEBI:11851"/>
        <dbReference type="ChEBI" id="CHEBI:15377"/>
        <dbReference type="ChEBI" id="CHEBI:49072"/>
        <dbReference type="EC" id="4.2.1.9"/>
    </reaction>
    <physiologicalReaction direction="left-to-right" evidence="1">
        <dbReference type="Rhea" id="RHEA:24810"/>
    </physiologicalReaction>
</comment>
<comment type="catalytic activity">
    <reaction evidence="1">
        <text>(2R,3R)-2,3-dihydroxy-3-methylpentanoate = (S)-3-methyl-2-oxopentanoate + H2O</text>
        <dbReference type="Rhea" id="RHEA:27694"/>
        <dbReference type="ChEBI" id="CHEBI:15377"/>
        <dbReference type="ChEBI" id="CHEBI:35146"/>
        <dbReference type="ChEBI" id="CHEBI:49258"/>
        <dbReference type="EC" id="4.2.1.9"/>
    </reaction>
    <physiologicalReaction direction="left-to-right" evidence="1">
        <dbReference type="Rhea" id="RHEA:27695"/>
    </physiologicalReaction>
</comment>
<comment type="cofactor">
    <cofactor evidence="1">
        <name>[2Fe-2S] cluster</name>
        <dbReference type="ChEBI" id="CHEBI:190135"/>
    </cofactor>
    <text evidence="1">Binds 1 [2Fe-2S] cluster per subunit. This cluster acts as a Lewis acid cofactor.</text>
</comment>
<comment type="cofactor">
    <cofactor evidence="1">
        <name>Mg(2+)</name>
        <dbReference type="ChEBI" id="CHEBI:18420"/>
    </cofactor>
</comment>
<comment type="pathway">
    <text evidence="1">Amino-acid biosynthesis; L-isoleucine biosynthesis; L-isoleucine from 2-oxobutanoate: step 3/4.</text>
</comment>
<comment type="pathway">
    <text evidence="1">Amino-acid biosynthesis; L-valine biosynthesis; L-valine from pyruvate: step 3/4.</text>
</comment>
<comment type="subunit">
    <text evidence="1">Homodimer.</text>
</comment>
<comment type="similarity">
    <text evidence="1">Belongs to the IlvD/Edd family.</text>
</comment>
<feature type="chain" id="PRO_0000103480" description="Dihydroxy-acid dehydratase">
    <location>
        <begin position="1"/>
        <end position="564"/>
    </location>
</feature>
<feature type="active site" description="Proton acceptor" evidence="1">
    <location>
        <position position="480"/>
    </location>
</feature>
<feature type="binding site" evidence="1">
    <location>
        <position position="53"/>
    </location>
    <ligand>
        <name>[2Fe-2S] cluster</name>
        <dbReference type="ChEBI" id="CHEBI:190135"/>
    </ligand>
</feature>
<feature type="binding site" evidence="1">
    <location>
        <position position="85"/>
    </location>
    <ligand>
        <name>Mg(2+)</name>
        <dbReference type="ChEBI" id="CHEBI:18420"/>
    </ligand>
</feature>
<feature type="binding site" evidence="1">
    <location>
        <position position="126"/>
    </location>
    <ligand>
        <name>[2Fe-2S] cluster</name>
        <dbReference type="ChEBI" id="CHEBI:190135"/>
    </ligand>
</feature>
<feature type="binding site" evidence="1">
    <location>
        <position position="127"/>
    </location>
    <ligand>
        <name>Mg(2+)</name>
        <dbReference type="ChEBI" id="CHEBI:18420"/>
    </ligand>
</feature>
<feature type="binding site" description="via carbamate group" evidence="1">
    <location>
        <position position="128"/>
    </location>
    <ligand>
        <name>Mg(2+)</name>
        <dbReference type="ChEBI" id="CHEBI:18420"/>
    </ligand>
</feature>
<feature type="binding site" evidence="1">
    <location>
        <position position="203"/>
    </location>
    <ligand>
        <name>[2Fe-2S] cluster</name>
        <dbReference type="ChEBI" id="CHEBI:190135"/>
    </ligand>
</feature>
<feature type="binding site" evidence="1">
    <location>
        <position position="454"/>
    </location>
    <ligand>
        <name>Mg(2+)</name>
        <dbReference type="ChEBI" id="CHEBI:18420"/>
    </ligand>
</feature>
<feature type="modified residue" description="N6-carboxylysine" evidence="1">
    <location>
        <position position="128"/>
    </location>
</feature>
<sequence length="564" mass="58783">MMPPDIKPRSRDVTDGLEKAAARGMLRAVGMNDDDFAKAQIGVASSWNEITPCNLSLDRLAKAVKEGVFSAGGYPLEFGTISVSDGISMGHQGMHFSLVSREVIADSVETVMQAERLDGSVLLAGCDKSLPGMLMAAARLDLASVFLYAGSILPGRTKLSDGTEHEVTLIDAFEAVGACSRGLMPRADVDAIERAICPGEGACGGMYTANTMASAAEALGMSLPGSAAPPATDRRRDGFARRSGQAVIELLRRGITARDILTKEAFENAIAVVMAFGGSTNAILHLLAIAHEADVTLSLEDFSRIGFKVPHIADVKPFGRHVMFDVDHIGGVPVVMKALLDAGLLHGDCLTVTGQTMAENLASIAPPDPDGQVIRTLHNPIHPTGGITILRGSLAPDGAVVKTAGLDSDVFEGTARVFDGERAALDALKDGTIAKGDVVVIRYEGPKGGPGMREMLAITGAIKGAGLGKDVLLLTDGRFSGGTTGFCVGHIAPEAVEAGPIAFLRDGDRVLLDVVGCSLDVLVDPVEFSSRKKDFIPPAPRYTTGVLAKYVKLVSSATVGAVCG</sequence>
<dbReference type="EC" id="4.2.1.9" evidence="1"/>
<dbReference type="EMBL" id="Z95398">
    <property type="protein sequence ID" value="CAB08798.1"/>
    <property type="molecule type" value="Genomic_DNA"/>
</dbReference>
<dbReference type="EMBL" id="AL583926">
    <property type="protein sequence ID" value="CAC32140.1"/>
    <property type="molecule type" value="Genomic_DNA"/>
</dbReference>
<dbReference type="PIR" id="F87235">
    <property type="entry name" value="F87235"/>
</dbReference>
<dbReference type="RefSeq" id="NP_302670.1">
    <property type="nucleotide sequence ID" value="NC_002677.1"/>
</dbReference>
<dbReference type="RefSeq" id="WP_010908989.1">
    <property type="nucleotide sequence ID" value="NC_002677.1"/>
</dbReference>
<dbReference type="SMR" id="O06069"/>
<dbReference type="STRING" id="272631.gene:17576474"/>
<dbReference type="KEGG" id="mle:ML2608"/>
<dbReference type="PATRIC" id="fig|272631.5.peg.5000"/>
<dbReference type="Leproma" id="ML2608"/>
<dbReference type="eggNOG" id="COG0129">
    <property type="taxonomic scope" value="Bacteria"/>
</dbReference>
<dbReference type="HOGENOM" id="CLU_014271_4_2_11"/>
<dbReference type="OrthoDB" id="9807077at2"/>
<dbReference type="UniPathway" id="UPA00047">
    <property type="reaction ID" value="UER00057"/>
</dbReference>
<dbReference type="UniPathway" id="UPA00049">
    <property type="reaction ID" value="UER00061"/>
</dbReference>
<dbReference type="Proteomes" id="UP000000806">
    <property type="component" value="Chromosome"/>
</dbReference>
<dbReference type="GO" id="GO:0051537">
    <property type="term" value="F:2 iron, 2 sulfur cluster binding"/>
    <property type="evidence" value="ECO:0007669"/>
    <property type="project" value="UniProtKB-UniRule"/>
</dbReference>
<dbReference type="GO" id="GO:0004160">
    <property type="term" value="F:dihydroxy-acid dehydratase activity"/>
    <property type="evidence" value="ECO:0007669"/>
    <property type="project" value="UniProtKB-UniRule"/>
</dbReference>
<dbReference type="GO" id="GO:0000287">
    <property type="term" value="F:magnesium ion binding"/>
    <property type="evidence" value="ECO:0007669"/>
    <property type="project" value="UniProtKB-UniRule"/>
</dbReference>
<dbReference type="GO" id="GO:0009097">
    <property type="term" value="P:isoleucine biosynthetic process"/>
    <property type="evidence" value="ECO:0007669"/>
    <property type="project" value="UniProtKB-UniRule"/>
</dbReference>
<dbReference type="GO" id="GO:0009099">
    <property type="term" value="P:L-valine biosynthetic process"/>
    <property type="evidence" value="ECO:0007669"/>
    <property type="project" value="UniProtKB-UniRule"/>
</dbReference>
<dbReference type="FunFam" id="3.50.30.80:FF:000001">
    <property type="entry name" value="Dihydroxy-acid dehydratase"/>
    <property type="match status" value="1"/>
</dbReference>
<dbReference type="Gene3D" id="3.50.30.80">
    <property type="entry name" value="IlvD/EDD C-terminal domain-like"/>
    <property type="match status" value="1"/>
</dbReference>
<dbReference type="HAMAP" id="MF_00012">
    <property type="entry name" value="IlvD"/>
    <property type="match status" value="1"/>
</dbReference>
<dbReference type="InterPro" id="IPR050165">
    <property type="entry name" value="DHAD_IlvD/Edd"/>
</dbReference>
<dbReference type="InterPro" id="IPR042096">
    <property type="entry name" value="Dihydro-acid_dehy_C"/>
</dbReference>
<dbReference type="InterPro" id="IPR004404">
    <property type="entry name" value="DihydroxyA_deHydtase"/>
</dbReference>
<dbReference type="InterPro" id="IPR020558">
    <property type="entry name" value="DiOHA_6PGluconate_deHydtase_CS"/>
</dbReference>
<dbReference type="InterPro" id="IPR056740">
    <property type="entry name" value="ILV_EDD_C"/>
</dbReference>
<dbReference type="InterPro" id="IPR000581">
    <property type="entry name" value="ILV_EDD_N"/>
</dbReference>
<dbReference type="InterPro" id="IPR037237">
    <property type="entry name" value="IlvD/EDD_N"/>
</dbReference>
<dbReference type="NCBIfam" id="TIGR00110">
    <property type="entry name" value="ilvD"/>
    <property type="match status" value="1"/>
</dbReference>
<dbReference type="NCBIfam" id="NF002068">
    <property type="entry name" value="PRK00911.1"/>
    <property type="match status" value="1"/>
</dbReference>
<dbReference type="PANTHER" id="PTHR21000">
    <property type="entry name" value="DIHYDROXY-ACID DEHYDRATASE DAD"/>
    <property type="match status" value="1"/>
</dbReference>
<dbReference type="PANTHER" id="PTHR21000:SF5">
    <property type="entry name" value="DIHYDROXY-ACID DEHYDRATASE, MITOCHONDRIAL"/>
    <property type="match status" value="1"/>
</dbReference>
<dbReference type="Pfam" id="PF24877">
    <property type="entry name" value="ILV_EDD_C"/>
    <property type="match status" value="1"/>
</dbReference>
<dbReference type="Pfam" id="PF00920">
    <property type="entry name" value="ILVD_EDD_N"/>
    <property type="match status" value="1"/>
</dbReference>
<dbReference type="SUPFAM" id="SSF143975">
    <property type="entry name" value="IlvD/EDD N-terminal domain-like"/>
    <property type="match status" value="1"/>
</dbReference>
<dbReference type="SUPFAM" id="SSF52016">
    <property type="entry name" value="LeuD/IlvD-like"/>
    <property type="match status" value="1"/>
</dbReference>
<dbReference type="PROSITE" id="PS00886">
    <property type="entry name" value="ILVD_EDD_1"/>
    <property type="match status" value="1"/>
</dbReference>
<dbReference type="PROSITE" id="PS00887">
    <property type="entry name" value="ILVD_EDD_2"/>
    <property type="match status" value="1"/>
</dbReference>
<accession>O06069</accession>
<reference key="1">
    <citation type="journal article" date="2001" name="Nature">
        <title>Massive gene decay in the leprosy bacillus.</title>
        <authorList>
            <person name="Cole S.T."/>
            <person name="Eiglmeier K."/>
            <person name="Parkhill J."/>
            <person name="James K.D."/>
            <person name="Thomson N.R."/>
            <person name="Wheeler P.R."/>
            <person name="Honore N."/>
            <person name="Garnier T."/>
            <person name="Churcher C.M."/>
            <person name="Harris D.E."/>
            <person name="Mungall K.L."/>
            <person name="Basham D."/>
            <person name="Brown D."/>
            <person name="Chillingworth T."/>
            <person name="Connor R."/>
            <person name="Davies R.M."/>
            <person name="Devlin K."/>
            <person name="Duthoy S."/>
            <person name="Feltwell T."/>
            <person name="Fraser A."/>
            <person name="Hamlin N."/>
            <person name="Holroyd S."/>
            <person name="Hornsby T."/>
            <person name="Jagels K."/>
            <person name="Lacroix C."/>
            <person name="Maclean J."/>
            <person name="Moule S."/>
            <person name="Murphy L.D."/>
            <person name="Oliver K."/>
            <person name="Quail M.A."/>
            <person name="Rajandream M.A."/>
            <person name="Rutherford K.M."/>
            <person name="Rutter S."/>
            <person name="Seeger K."/>
            <person name="Simon S."/>
            <person name="Simmonds M."/>
            <person name="Skelton J."/>
            <person name="Squares R."/>
            <person name="Squares S."/>
            <person name="Stevens K."/>
            <person name="Taylor K."/>
            <person name="Whitehead S."/>
            <person name="Woodward J.R."/>
            <person name="Barrell B.G."/>
        </authorList>
    </citation>
    <scope>NUCLEOTIDE SEQUENCE [LARGE SCALE GENOMIC DNA]</scope>
    <source>
        <strain>TN</strain>
    </source>
</reference>